<feature type="signal peptide">
    <location>
        <begin position="1"/>
        <end position="29"/>
    </location>
</feature>
<feature type="chain" id="PRO_0000005070" description="Platelet factor 4">
    <location>
        <begin position="30"/>
        <end position="105"/>
    </location>
</feature>
<feature type="binding site" evidence="1">
    <location>
        <begin position="96"/>
        <end position="102"/>
    </location>
    <ligand>
        <name>heparin</name>
        <dbReference type="ChEBI" id="CHEBI:28304"/>
    </ligand>
</feature>
<feature type="modified residue" description="Phosphoserine" evidence="5">
    <location>
        <position position="61"/>
    </location>
</feature>
<feature type="glycosylation site" description="O-linked (GalNAc...) threonine; partial" evidence="3">
    <location>
        <position position="31"/>
    </location>
</feature>
<feature type="disulfide bond" evidence="1">
    <location>
        <begin position="44"/>
        <end position="71"/>
    </location>
</feature>
<feature type="disulfide bond" evidence="1">
    <location>
        <begin position="46"/>
        <end position="87"/>
    </location>
</feature>
<accession>P06765</accession>
<sequence length="105" mass="11287">MSAAAVFRGLRPSPELLLLGLLLLPAVVAVTRASPEESDGDLSCVCVKTSSSRIHLKRITSLEVIKAGPHCAVPQLIATLKNGSKICLDRQVPLYKKIIKKLLES</sequence>
<keyword id="KW-0145">Chemotaxis</keyword>
<keyword id="KW-0202">Cytokine</keyword>
<keyword id="KW-1015">Disulfide bond</keyword>
<keyword id="KW-0325">Glycoprotein</keyword>
<keyword id="KW-0358">Heparin-binding</keyword>
<keyword id="KW-0597">Phosphoprotein</keyword>
<keyword id="KW-1185">Reference proteome</keyword>
<keyword id="KW-0964">Secreted</keyword>
<keyword id="KW-0732">Signal</keyword>
<organism>
    <name type="scientific">Rattus norvegicus</name>
    <name type="common">Rat</name>
    <dbReference type="NCBI Taxonomy" id="10116"/>
    <lineage>
        <taxon>Eukaryota</taxon>
        <taxon>Metazoa</taxon>
        <taxon>Chordata</taxon>
        <taxon>Craniata</taxon>
        <taxon>Vertebrata</taxon>
        <taxon>Euteleostomi</taxon>
        <taxon>Mammalia</taxon>
        <taxon>Eutheria</taxon>
        <taxon>Euarchontoglires</taxon>
        <taxon>Glires</taxon>
        <taxon>Rodentia</taxon>
        <taxon>Myomorpha</taxon>
        <taxon>Muroidea</taxon>
        <taxon>Muridae</taxon>
        <taxon>Murinae</taxon>
        <taxon>Rattus</taxon>
    </lineage>
</organism>
<dbReference type="EMBL" id="M15254">
    <property type="protein sequence ID" value="AAA41832.1"/>
    <property type="molecule type" value="Genomic_DNA"/>
</dbReference>
<dbReference type="PIR" id="A26774">
    <property type="entry name" value="A26774"/>
</dbReference>
<dbReference type="RefSeq" id="NP_001007730.1">
    <property type="nucleotide sequence ID" value="NM_001007729.2"/>
</dbReference>
<dbReference type="SMR" id="P06765"/>
<dbReference type="BioGRID" id="262303">
    <property type="interactions" value="1"/>
</dbReference>
<dbReference type="FunCoup" id="P06765">
    <property type="interactions" value="358"/>
</dbReference>
<dbReference type="IntAct" id="P06765">
    <property type="interactions" value="1"/>
</dbReference>
<dbReference type="STRING" id="10116.ENSRNOP00000032276"/>
<dbReference type="GlyCosmos" id="P06765">
    <property type="glycosylation" value="1 site, No reported glycans"/>
</dbReference>
<dbReference type="GlyGen" id="P06765">
    <property type="glycosylation" value="1 site"/>
</dbReference>
<dbReference type="iPTMnet" id="P06765"/>
<dbReference type="PhosphoSitePlus" id="P06765"/>
<dbReference type="PaxDb" id="10116-ENSRNOP00000032276"/>
<dbReference type="Ensembl" id="ENSRNOT00000033406.2">
    <property type="protein sequence ID" value="ENSRNOP00000032276.1"/>
    <property type="gene ID" value="ENSRNOG00000028015.2"/>
</dbReference>
<dbReference type="GeneID" id="360918"/>
<dbReference type="KEGG" id="rno:360918"/>
<dbReference type="UCSC" id="RGD:3305">
    <property type="organism name" value="rat"/>
</dbReference>
<dbReference type="AGR" id="RGD:3305"/>
<dbReference type="CTD" id="5196"/>
<dbReference type="RGD" id="3305">
    <property type="gene designation" value="Pf4"/>
</dbReference>
<dbReference type="eggNOG" id="ENOG502TF57">
    <property type="taxonomic scope" value="Eukaryota"/>
</dbReference>
<dbReference type="GeneTree" id="ENSGT00940000163368"/>
<dbReference type="HOGENOM" id="CLU_143902_1_2_1"/>
<dbReference type="InParanoid" id="P06765"/>
<dbReference type="OMA" id="CAVPQLI"/>
<dbReference type="OrthoDB" id="9937393at2759"/>
<dbReference type="PhylomeDB" id="P06765"/>
<dbReference type="TreeFam" id="TF333433"/>
<dbReference type="Reactome" id="R-RNO-114608">
    <property type="pathway name" value="Platelet degranulation"/>
</dbReference>
<dbReference type="Reactome" id="R-RNO-140875">
    <property type="pathway name" value="Common Pathway of Fibrin Clot Formation"/>
</dbReference>
<dbReference type="Reactome" id="R-RNO-202733">
    <property type="pathway name" value="Cell surface interactions at the vascular wall"/>
</dbReference>
<dbReference type="Reactome" id="R-RNO-380108">
    <property type="pathway name" value="Chemokine receptors bind chemokines"/>
</dbReference>
<dbReference type="Reactome" id="R-RNO-418594">
    <property type="pathway name" value="G alpha (i) signalling events"/>
</dbReference>
<dbReference type="PRO" id="PR:P06765"/>
<dbReference type="Proteomes" id="UP000002494">
    <property type="component" value="Chromosome 14"/>
</dbReference>
<dbReference type="Bgee" id="ENSRNOG00000028015">
    <property type="expression patterns" value="Expressed in spleen and 18 other cell types or tissues"/>
</dbReference>
<dbReference type="GO" id="GO:0005737">
    <property type="term" value="C:cytoplasm"/>
    <property type="evidence" value="ECO:0000266"/>
    <property type="project" value="RGD"/>
</dbReference>
<dbReference type="GO" id="GO:0005615">
    <property type="term" value="C:extracellular space"/>
    <property type="evidence" value="ECO:0000266"/>
    <property type="project" value="RGD"/>
</dbReference>
<dbReference type="GO" id="GO:0031091">
    <property type="term" value="C:platelet alpha granule"/>
    <property type="evidence" value="ECO:0000314"/>
    <property type="project" value="RGD"/>
</dbReference>
<dbReference type="GO" id="GO:0032991">
    <property type="term" value="C:protein-containing complex"/>
    <property type="evidence" value="ECO:0000314"/>
    <property type="project" value="RGD"/>
</dbReference>
<dbReference type="GO" id="GO:0031982">
    <property type="term" value="C:vesicle"/>
    <property type="evidence" value="ECO:0000314"/>
    <property type="project" value="RGD"/>
</dbReference>
<dbReference type="GO" id="GO:0008009">
    <property type="term" value="F:chemokine activity"/>
    <property type="evidence" value="ECO:0000266"/>
    <property type="project" value="RGD"/>
</dbReference>
<dbReference type="GO" id="GO:0045236">
    <property type="term" value="F:CXCR chemokine receptor binding"/>
    <property type="evidence" value="ECO:0000318"/>
    <property type="project" value="GO_Central"/>
</dbReference>
<dbReference type="GO" id="GO:0048248">
    <property type="term" value="F:CXCR3 chemokine receptor binding"/>
    <property type="evidence" value="ECO:0000250"/>
    <property type="project" value="UniProtKB"/>
</dbReference>
<dbReference type="GO" id="GO:0008201">
    <property type="term" value="F:heparin binding"/>
    <property type="evidence" value="ECO:0000250"/>
    <property type="project" value="UniProtKB"/>
</dbReference>
<dbReference type="GO" id="GO:0048018">
    <property type="term" value="F:receptor ligand activity"/>
    <property type="evidence" value="ECO:0000266"/>
    <property type="project" value="RGD"/>
</dbReference>
<dbReference type="GO" id="GO:0007189">
    <property type="term" value="P:adenylate cyclase-activating G protein-coupled receptor signaling pathway"/>
    <property type="evidence" value="ECO:0000250"/>
    <property type="project" value="UniProtKB"/>
</dbReference>
<dbReference type="GO" id="GO:0061844">
    <property type="term" value="P:antimicrobial humoral immune response mediated by antimicrobial peptide"/>
    <property type="evidence" value="ECO:0000266"/>
    <property type="project" value="RGD"/>
</dbReference>
<dbReference type="GO" id="GO:0071222">
    <property type="term" value="P:cellular response to lipopolysaccharide"/>
    <property type="evidence" value="ECO:0000318"/>
    <property type="project" value="GO_Central"/>
</dbReference>
<dbReference type="GO" id="GO:0019221">
    <property type="term" value="P:cytokine-mediated signaling pathway"/>
    <property type="evidence" value="ECO:0000250"/>
    <property type="project" value="UniProtKB"/>
</dbReference>
<dbReference type="GO" id="GO:0042832">
    <property type="term" value="P:defense response to protozoan"/>
    <property type="evidence" value="ECO:0000266"/>
    <property type="project" value="RGD"/>
</dbReference>
<dbReference type="GO" id="GO:0006955">
    <property type="term" value="P:immune response"/>
    <property type="evidence" value="ECO:0000314"/>
    <property type="project" value="RGD"/>
</dbReference>
<dbReference type="GO" id="GO:0006954">
    <property type="term" value="P:inflammatory response"/>
    <property type="evidence" value="ECO:0000318"/>
    <property type="project" value="GO_Central"/>
</dbReference>
<dbReference type="GO" id="GO:0030595">
    <property type="term" value="P:leukocyte chemotaxis"/>
    <property type="evidence" value="ECO:0000250"/>
    <property type="project" value="UniProtKB"/>
</dbReference>
<dbReference type="GO" id="GO:0002548">
    <property type="term" value="P:monocyte chemotaxis"/>
    <property type="evidence" value="ECO:0000266"/>
    <property type="project" value="RGD"/>
</dbReference>
<dbReference type="GO" id="GO:0016525">
    <property type="term" value="P:negative regulation of angiogenesis"/>
    <property type="evidence" value="ECO:0000250"/>
    <property type="project" value="UniProtKB"/>
</dbReference>
<dbReference type="GO" id="GO:0030195">
    <property type="term" value="P:negative regulation of blood coagulation"/>
    <property type="evidence" value="ECO:0000266"/>
    <property type="project" value="RGD"/>
</dbReference>
<dbReference type="GO" id="GO:2001240">
    <property type="term" value="P:negative regulation of extrinsic apoptotic signaling pathway in absence of ligand"/>
    <property type="evidence" value="ECO:0000266"/>
    <property type="project" value="RGD"/>
</dbReference>
<dbReference type="GO" id="GO:0050728">
    <property type="term" value="P:negative regulation of inflammatory response"/>
    <property type="evidence" value="ECO:0000314"/>
    <property type="project" value="RGD"/>
</dbReference>
<dbReference type="GO" id="GO:0045653">
    <property type="term" value="P:negative regulation of megakaryocyte differentiation"/>
    <property type="evidence" value="ECO:0000250"/>
    <property type="project" value="UniProtKB"/>
</dbReference>
<dbReference type="GO" id="GO:0045347">
    <property type="term" value="P:negative regulation of MHC class II biosynthetic process"/>
    <property type="evidence" value="ECO:0000266"/>
    <property type="project" value="RGD"/>
</dbReference>
<dbReference type="GO" id="GO:2000320">
    <property type="term" value="P:negative regulation of T-helper 17 cell differentiation"/>
    <property type="evidence" value="ECO:0000314"/>
    <property type="project" value="RGD"/>
</dbReference>
<dbReference type="GO" id="GO:0030593">
    <property type="term" value="P:neutrophil chemotaxis"/>
    <property type="evidence" value="ECO:0000318"/>
    <property type="project" value="GO_Central"/>
</dbReference>
<dbReference type="GO" id="GO:0030316">
    <property type="term" value="P:osteoclast differentiation"/>
    <property type="evidence" value="ECO:0007007"/>
    <property type="project" value="RGD"/>
</dbReference>
<dbReference type="GO" id="GO:0030168">
    <property type="term" value="P:platelet activation"/>
    <property type="evidence" value="ECO:0000250"/>
    <property type="project" value="UniProtKB"/>
</dbReference>
<dbReference type="GO" id="GO:0010628">
    <property type="term" value="P:positive regulation of gene expression"/>
    <property type="evidence" value="ECO:0000266"/>
    <property type="project" value="RGD"/>
</dbReference>
<dbReference type="GO" id="GO:0010744">
    <property type="term" value="P:positive regulation of macrophage derived foam cell differentiation"/>
    <property type="evidence" value="ECO:0000266"/>
    <property type="project" value="RGD"/>
</dbReference>
<dbReference type="GO" id="GO:0045651">
    <property type="term" value="P:positive regulation of macrophage differentiation"/>
    <property type="evidence" value="ECO:0000266"/>
    <property type="project" value="RGD"/>
</dbReference>
<dbReference type="GO" id="GO:0045944">
    <property type="term" value="P:positive regulation of transcription by RNA polymerase II"/>
    <property type="evidence" value="ECO:0000250"/>
    <property type="project" value="UniProtKB"/>
</dbReference>
<dbReference type="GO" id="GO:0032760">
    <property type="term" value="P:positive regulation of tumor necrosis factor production"/>
    <property type="evidence" value="ECO:0000266"/>
    <property type="project" value="RGD"/>
</dbReference>
<dbReference type="GO" id="GO:0065003">
    <property type="term" value="P:protein-containing complex assembly"/>
    <property type="evidence" value="ECO:0000353"/>
    <property type="project" value="RGD"/>
</dbReference>
<dbReference type="GO" id="GO:0042127">
    <property type="term" value="P:regulation of cell population proliferation"/>
    <property type="evidence" value="ECO:0000250"/>
    <property type="project" value="UniProtKB"/>
</dbReference>
<dbReference type="GO" id="GO:1904044">
    <property type="term" value="P:response to aldosterone"/>
    <property type="evidence" value="ECO:0000270"/>
    <property type="project" value="RGD"/>
</dbReference>
<dbReference type="CDD" id="cd00273">
    <property type="entry name" value="Chemokine_CXC"/>
    <property type="match status" value="1"/>
</dbReference>
<dbReference type="FunFam" id="2.40.50.40:FF:000004">
    <property type="entry name" value="C-X-C motif chemokine"/>
    <property type="match status" value="1"/>
</dbReference>
<dbReference type="Gene3D" id="2.40.50.40">
    <property type="match status" value="1"/>
</dbReference>
<dbReference type="InterPro" id="IPR039809">
    <property type="entry name" value="Chemokine_b/g/d"/>
</dbReference>
<dbReference type="InterPro" id="IPR001089">
    <property type="entry name" value="Chemokine_CXC"/>
</dbReference>
<dbReference type="InterPro" id="IPR018048">
    <property type="entry name" value="Chemokine_CXC_CS"/>
</dbReference>
<dbReference type="InterPro" id="IPR001811">
    <property type="entry name" value="Chemokine_IL8-like_dom"/>
</dbReference>
<dbReference type="InterPro" id="IPR033899">
    <property type="entry name" value="CXC_Chemokine_domain"/>
</dbReference>
<dbReference type="InterPro" id="IPR036048">
    <property type="entry name" value="Interleukin_8-like_sf"/>
</dbReference>
<dbReference type="PANTHER" id="PTHR12015:SF211">
    <property type="entry name" value="PLATELET FACTOR 4"/>
    <property type="match status" value="1"/>
</dbReference>
<dbReference type="PANTHER" id="PTHR12015">
    <property type="entry name" value="SMALL INDUCIBLE CYTOKINE A"/>
    <property type="match status" value="1"/>
</dbReference>
<dbReference type="Pfam" id="PF00048">
    <property type="entry name" value="IL8"/>
    <property type="match status" value="1"/>
</dbReference>
<dbReference type="PRINTS" id="PR00436">
    <property type="entry name" value="INTERLEUKIN8"/>
</dbReference>
<dbReference type="PRINTS" id="PR00437">
    <property type="entry name" value="SMALLCYTKCXC"/>
</dbReference>
<dbReference type="SMART" id="SM00199">
    <property type="entry name" value="SCY"/>
    <property type="match status" value="1"/>
</dbReference>
<dbReference type="SUPFAM" id="SSF54117">
    <property type="entry name" value="Interleukin 8-like chemokines"/>
    <property type="match status" value="1"/>
</dbReference>
<dbReference type="PROSITE" id="PS00471">
    <property type="entry name" value="SMALL_CYTOKINES_CXC"/>
    <property type="match status" value="1"/>
</dbReference>
<proteinExistence type="evidence at protein level"/>
<reference key="1">
    <citation type="journal article" date="1987" name="Mol. Cell. Biol.">
        <title>Structure of the rat platelet factor 4 gene: a marker for megakaryocyte differentiation.</title>
        <authorList>
            <person name="Doi T."/>
            <person name="Greenberg S.M."/>
            <person name="Rosenberg R.D."/>
        </authorList>
    </citation>
    <scope>NUCLEOTIDE SEQUENCE [GENOMIC DNA]</scope>
</reference>
<reference key="2">
    <citation type="journal article" date="1994" name="Eur. J. Biochem.">
        <title>Rat platelets contain glycosylated and non-glycosylated forms of platelet factor 4. Identification and characterization by mass spectrometry.</title>
        <authorList>
            <person name="Ravanat C."/>
            <person name="Gachet C."/>
            <person name="Herbert J.-M."/>
            <person name="Schuhler S."/>
            <person name="Guillemot J.-C."/>
            <person name="Uzabiaga F."/>
            <person name="Picard C."/>
            <person name="Ferrara P."/>
            <person name="Freund M."/>
            <person name="Cazenave J.-P."/>
        </authorList>
    </citation>
    <scope>GLYCOSYLATION AT THR-31</scope>
</reference>
<reference key="3">
    <citation type="journal article" date="2012" name="Nat. Commun.">
        <title>Quantitative maps of protein phosphorylation sites across 14 different rat organs and tissues.</title>
        <authorList>
            <person name="Lundby A."/>
            <person name="Secher A."/>
            <person name="Lage K."/>
            <person name="Nordsborg N.B."/>
            <person name="Dmytriyev A."/>
            <person name="Lundby C."/>
            <person name="Olsen J.V."/>
        </authorList>
    </citation>
    <scope>PHOSPHORYLATION [LARGE SCALE ANALYSIS] AT SER-61</scope>
    <scope>IDENTIFICATION BY MASS SPECTROMETRY [LARGE SCALE ANALYSIS]</scope>
</reference>
<name>PLF4_RAT</name>
<comment type="function">
    <text evidence="2">Chemokine released during platelet aggregation that plays a role in different biological processes including hematopoiesis, cell proliferation, differentiation, and activation. Acts via different functional receptors including CCR1, CXCR3A or CXCR3B. Upon interaction with CXCR3A receptor, induces activated T-lymphocytes migration mediated via downstream Ras/extracellular signal-regulated kinase (ERK) signaling. Neutralizes the anticoagulant effect of heparin by binding more strongly to heparin than to the chondroitin-4-sulfate chains of the carrier molecule. Plays a role in the inhibition of hematopoiesis and in the maintenance of hematopoietic stem cell (HSC) quiescence. Chemotactic for neutrophils and monocytes via CCR1. Inhibits endothelial cell proliferation. In cooperation with toll-like receptor 8/TLR8, induces chromatin remodeling and activates inflammatory gene expression via the TBK1-IRF5 axis. In addition, induces myofibroblast differentiation and collagen synthesis in different precursor cells, including endothelial cells, by stimulating endothelial-to-mesenchymal transition. Interacts with thrombomodulin/THBD to enhance the activation of protein C and thus potentiates its anticoagulant activity.</text>
</comment>
<comment type="subunit">
    <text evidence="2">Homotetramer. Interacts with TNFAIP6 (via Link domain). Interacts with CCR1. Interacts with CXCR3. Interacts with THBD; this interaction enhances generation of activated protein C.</text>
</comment>
<comment type="subcellular location">
    <subcellularLocation>
        <location>Secreted</location>
    </subcellularLocation>
</comment>
<comment type="PTM">
    <text evidence="3">O-linked glycan consists of Gal-GalNAc disaccharide which is modified with sialic acid residues (microheterogeneity).</text>
</comment>
<comment type="similarity">
    <text evidence="4">Belongs to the intercrine alpha (chemokine CxC) family.</text>
</comment>
<gene>
    <name type="primary">Pf4</name>
    <name type="synonym">Cxcl4</name>
    <name type="synonym">Scyb4</name>
</gene>
<evidence type="ECO:0000250" key="1"/>
<evidence type="ECO:0000250" key="2">
    <source>
        <dbReference type="UniProtKB" id="P02776"/>
    </source>
</evidence>
<evidence type="ECO:0000269" key="3">
    <source>
    </source>
</evidence>
<evidence type="ECO:0000305" key="4"/>
<evidence type="ECO:0007744" key="5">
    <source>
    </source>
</evidence>
<protein>
    <recommendedName>
        <fullName>Platelet factor 4</fullName>
        <shortName>PF-4</shortName>
    </recommendedName>
    <alternativeName>
        <fullName>C-X-C motif chemokine 4</fullName>
    </alternativeName>
</protein>